<keyword id="KW-0067">ATP-binding</keyword>
<keyword id="KW-0143">Chaperone</keyword>
<keyword id="KW-0547">Nucleotide-binding</keyword>
<keyword id="KW-0597">Phosphoprotein</keyword>
<keyword id="KW-0346">Stress response</keyword>
<organism>
    <name type="scientific">Clostridium botulinum (strain 657 / Type Ba4)</name>
    <dbReference type="NCBI Taxonomy" id="515621"/>
    <lineage>
        <taxon>Bacteria</taxon>
        <taxon>Bacillati</taxon>
        <taxon>Bacillota</taxon>
        <taxon>Clostridia</taxon>
        <taxon>Eubacteriales</taxon>
        <taxon>Clostridiaceae</taxon>
        <taxon>Clostridium</taxon>
    </lineage>
</organism>
<evidence type="ECO:0000255" key="1">
    <source>
        <dbReference type="HAMAP-Rule" id="MF_00332"/>
    </source>
</evidence>
<evidence type="ECO:0000256" key="2">
    <source>
        <dbReference type="SAM" id="MobiDB-lite"/>
    </source>
</evidence>
<gene>
    <name evidence="1" type="primary">dnaK</name>
    <name type="ordered locus">CLJ_B3216</name>
</gene>
<proteinExistence type="inferred from homology"/>
<accession>C3L3G7</accession>
<reference key="1">
    <citation type="submission" date="2008-05" db="EMBL/GenBank/DDBJ databases">
        <title>Genome sequence of Clostridium botulinum Ba4 strain 657.</title>
        <authorList>
            <person name="Shrivastava S."/>
            <person name="Brown J.L."/>
            <person name="Bruce D."/>
            <person name="Detter C."/>
            <person name="Munk C."/>
            <person name="Smith L.A."/>
            <person name="Smith T.J."/>
            <person name="Sutton G."/>
            <person name="Brettin T.S."/>
        </authorList>
    </citation>
    <scope>NUCLEOTIDE SEQUENCE [LARGE SCALE GENOMIC DNA]</scope>
    <source>
        <strain>657 / Type Ba4</strain>
    </source>
</reference>
<protein>
    <recommendedName>
        <fullName evidence="1">Chaperone protein DnaK</fullName>
    </recommendedName>
    <alternativeName>
        <fullName evidence="1">HSP70</fullName>
    </alternativeName>
    <alternativeName>
        <fullName evidence="1">Heat shock 70 kDa protein</fullName>
    </alternativeName>
    <alternativeName>
        <fullName evidence="1">Heat shock protein 70</fullName>
    </alternativeName>
</protein>
<dbReference type="EMBL" id="CP001083">
    <property type="protein sequence ID" value="ACQ54917.1"/>
    <property type="molecule type" value="Genomic_DNA"/>
</dbReference>
<dbReference type="RefSeq" id="WP_003359986.1">
    <property type="nucleotide sequence ID" value="NC_012658.1"/>
</dbReference>
<dbReference type="SMR" id="C3L3G7"/>
<dbReference type="KEGG" id="cbi:CLJ_B3216"/>
<dbReference type="HOGENOM" id="CLU_005965_2_4_9"/>
<dbReference type="Proteomes" id="UP000002333">
    <property type="component" value="Chromosome"/>
</dbReference>
<dbReference type="GO" id="GO:0005524">
    <property type="term" value="F:ATP binding"/>
    <property type="evidence" value="ECO:0007669"/>
    <property type="project" value="UniProtKB-UniRule"/>
</dbReference>
<dbReference type="GO" id="GO:0140662">
    <property type="term" value="F:ATP-dependent protein folding chaperone"/>
    <property type="evidence" value="ECO:0007669"/>
    <property type="project" value="InterPro"/>
</dbReference>
<dbReference type="GO" id="GO:0051082">
    <property type="term" value="F:unfolded protein binding"/>
    <property type="evidence" value="ECO:0007669"/>
    <property type="project" value="InterPro"/>
</dbReference>
<dbReference type="CDD" id="cd10234">
    <property type="entry name" value="ASKHA_NBD_HSP70_DnaK-like"/>
    <property type="match status" value="1"/>
</dbReference>
<dbReference type="FunFam" id="2.60.34.10:FF:000014">
    <property type="entry name" value="Chaperone protein DnaK HSP70"/>
    <property type="match status" value="1"/>
</dbReference>
<dbReference type="FunFam" id="3.30.420.40:FF:000020">
    <property type="entry name" value="Chaperone protein HscA homolog"/>
    <property type="match status" value="1"/>
</dbReference>
<dbReference type="FunFam" id="1.20.1270.10:FF:000001">
    <property type="entry name" value="Molecular chaperone DnaK"/>
    <property type="match status" value="1"/>
</dbReference>
<dbReference type="FunFam" id="3.30.420.40:FF:000004">
    <property type="entry name" value="Molecular chaperone DnaK"/>
    <property type="match status" value="1"/>
</dbReference>
<dbReference type="FunFam" id="3.90.640.10:FF:000003">
    <property type="entry name" value="Molecular chaperone DnaK"/>
    <property type="match status" value="1"/>
</dbReference>
<dbReference type="Gene3D" id="1.20.1270.10">
    <property type="match status" value="1"/>
</dbReference>
<dbReference type="Gene3D" id="3.30.420.40">
    <property type="match status" value="2"/>
</dbReference>
<dbReference type="Gene3D" id="3.90.640.10">
    <property type="entry name" value="Actin, Chain A, domain 4"/>
    <property type="match status" value="1"/>
</dbReference>
<dbReference type="Gene3D" id="2.60.34.10">
    <property type="entry name" value="Substrate Binding Domain Of DNAk, Chain A, domain 1"/>
    <property type="match status" value="1"/>
</dbReference>
<dbReference type="HAMAP" id="MF_00332">
    <property type="entry name" value="DnaK"/>
    <property type="match status" value="1"/>
</dbReference>
<dbReference type="InterPro" id="IPR043129">
    <property type="entry name" value="ATPase_NBD"/>
</dbReference>
<dbReference type="InterPro" id="IPR012725">
    <property type="entry name" value="Chaperone_DnaK"/>
</dbReference>
<dbReference type="InterPro" id="IPR018181">
    <property type="entry name" value="Heat_shock_70_CS"/>
</dbReference>
<dbReference type="InterPro" id="IPR029048">
    <property type="entry name" value="HSP70_C_sf"/>
</dbReference>
<dbReference type="InterPro" id="IPR029047">
    <property type="entry name" value="HSP70_peptide-bd_sf"/>
</dbReference>
<dbReference type="InterPro" id="IPR013126">
    <property type="entry name" value="Hsp_70_fam"/>
</dbReference>
<dbReference type="NCBIfam" id="NF001413">
    <property type="entry name" value="PRK00290.1"/>
    <property type="match status" value="1"/>
</dbReference>
<dbReference type="NCBIfam" id="TIGR02350">
    <property type="entry name" value="prok_dnaK"/>
    <property type="match status" value="1"/>
</dbReference>
<dbReference type="PANTHER" id="PTHR19375">
    <property type="entry name" value="HEAT SHOCK PROTEIN 70KDA"/>
    <property type="match status" value="1"/>
</dbReference>
<dbReference type="Pfam" id="PF00012">
    <property type="entry name" value="HSP70"/>
    <property type="match status" value="1"/>
</dbReference>
<dbReference type="PRINTS" id="PR00301">
    <property type="entry name" value="HEATSHOCK70"/>
</dbReference>
<dbReference type="SUPFAM" id="SSF53067">
    <property type="entry name" value="Actin-like ATPase domain"/>
    <property type="match status" value="2"/>
</dbReference>
<dbReference type="SUPFAM" id="SSF100934">
    <property type="entry name" value="Heat shock protein 70kD (HSP70), C-terminal subdomain"/>
    <property type="match status" value="1"/>
</dbReference>
<dbReference type="SUPFAM" id="SSF100920">
    <property type="entry name" value="Heat shock protein 70kD (HSP70), peptide-binding domain"/>
    <property type="match status" value="1"/>
</dbReference>
<dbReference type="PROSITE" id="PS00297">
    <property type="entry name" value="HSP70_1"/>
    <property type="match status" value="1"/>
</dbReference>
<dbReference type="PROSITE" id="PS00329">
    <property type="entry name" value="HSP70_2"/>
    <property type="match status" value="1"/>
</dbReference>
<dbReference type="PROSITE" id="PS01036">
    <property type="entry name" value="HSP70_3"/>
    <property type="match status" value="1"/>
</dbReference>
<feature type="chain" id="PRO_1000205180" description="Chaperone protein DnaK">
    <location>
        <begin position="1"/>
        <end position="623"/>
    </location>
</feature>
<feature type="region of interest" description="Disordered" evidence="2">
    <location>
        <begin position="578"/>
        <end position="623"/>
    </location>
</feature>
<feature type="compositionally biased region" description="Low complexity" evidence="2">
    <location>
        <begin position="591"/>
        <end position="604"/>
    </location>
</feature>
<feature type="compositionally biased region" description="Basic and acidic residues" evidence="2">
    <location>
        <begin position="605"/>
        <end position="623"/>
    </location>
</feature>
<feature type="modified residue" description="Phosphothreonine; by autocatalysis" evidence="1">
    <location>
        <position position="175"/>
    </location>
</feature>
<sequence length="623" mass="66842">MAKIIGIDLGTTNSCVSVMEGGEPVVIPNAEGSRTTPSVVSFQANGERLIGQVAKRQAITNPEKTIISIKRYMGTDHKVNIDNTEYTPQQISAMVLQKLKADAEAYLGEKVTQAVITVPAYFNDSQRQATKDAGKIAGLEVLRIINEPTAASLAYGLDKMDTNEKILVYDLGGGTFDVSILELGDGVFEVKATNGDTKLGGDDFDQKLIDYIAETFKAENGIDLRNDKMAIQRLKEAAEKAKIELSSATQTNINLPFITADATGPKHIDMNLTRAKFNELTHDLVQRTLEPIKKSLEGSGYAMSDIDKIIMVGGSTRIPAVQDAVKDFTGKELSKGVNPDEVVAMGAAIQAGVLTGEVKDVLLLDVTPLTLGIETFGGVSTTLIEKNTTIPTRKSQVFSTAADGQTSVEIHVVQGERSMAADNKTLGRFTLSGIAPAPRGIPQIEVTFDIDANGIVNVSAKDKGTGKEANITITASTNLTDDEIEKAVNEAKKFEAEDKKRKESIEVKNNADQIVYQTEKTLTDLGDKVSAEDKAQIEEKVKVVKDVKDGEDLEAIKKATEDLTQTFYGISSKIYQQANPEGAPGAGFDPNNMGGANAGNASAGNDKKDDNVVDADFKVEDDK</sequence>
<comment type="function">
    <text evidence="1">Acts as a chaperone.</text>
</comment>
<comment type="induction">
    <text evidence="1">By stress conditions e.g. heat shock.</text>
</comment>
<comment type="similarity">
    <text evidence="1">Belongs to the heat shock protein 70 family.</text>
</comment>
<name>DNAK_CLOB6</name>